<name>IHFB_XANCP</name>
<feature type="chain" id="PRO_0000105078" description="Integration host factor subunit beta">
    <location>
        <begin position="1"/>
        <end position="103"/>
    </location>
</feature>
<feature type="region of interest" description="Disordered" evidence="2">
    <location>
        <begin position="62"/>
        <end position="81"/>
    </location>
</feature>
<dbReference type="EMBL" id="AE008922">
    <property type="protein sequence ID" value="AAM41473.1"/>
    <property type="molecule type" value="Genomic_DNA"/>
</dbReference>
<dbReference type="RefSeq" id="NP_637549.1">
    <property type="nucleotide sequence ID" value="NC_003902.1"/>
</dbReference>
<dbReference type="RefSeq" id="WP_011037339.1">
    <property type="nucleotide sequence ID" value="NC_003902.1"/>
</dbReference>
<dbReference type="SMR" id="Q8P8P6"/>
<dbReference type="STRING" id="190485.XCC2193"/>
<dbReference type="EnsemblBacteria" id="AAM41473">
    <property type="protein sequence ID" value="AAM41473"/>
    <property type="gene ID" value="XCC2193"/>
</dbReference>
<dbReference type="KEGG" id="xcc:XCC2193"/>
<dbReference type="PATRIC" id="fig|190485.4.peg.2342"/>
<dbReference type="eggNOG" id="COG0776">
    <property type="taxonomic scope" value="Bacteria"/>
</dbReference>
<dbReference type="HOGENOM" id="CLU_105066_2_0_6"/>
<dbReference type="OrthoDB" id="9804203at2"/>
<dbReference type="Proteomes" id="UP000001010">
    <property type="component" value="Chromosome"/>
</dbReference>
<dbReference type="GO" id="GO:0005694">
    <property type="term" value="C:chromosome"/>
    <property type="evidence" value="ECO:0007669"/>
    <property type="project" value="InterPro"/>
</dbReference>
<dbReference type="GO" id="GO:0005829">
    <property type="term" value="C:cytosol"/>
    <property type="evidence" value="ECO:0000318"/>
    <property type="project" value="GO_Central"/>
</dbReference>
<dbReference type="GO" id="GO:0003677">
    <property type="term" value="F:DNA binding"/>
    <property type="evidence" value="ECO:0000318"/>
    <property type="project" value="GO_Central"/>
</dbReference>
<dbReference type="GO" id="GO:0030527">
    <property type="term" value="F:structural constituent of chromatin"/>
    <property type="evidence" value="ECO:0007669"/>
    <property type="project" value="InterPro"/>
</dbReference>
<dbReference type="GO" id="GO:0006310">
    <property type="term" value="P:DNA recombination"/>
    <property type="evidence" value="ECO:0007669"/>
    <property type="project" value="UniProtKB-UniRule"/>
</dbReference>
<dbReference type="GO" id="GO:0006355">
    <property type="term" value="P:regulation of DNA-templated transcription"/>
    <property type="evidence" value="ECO:0007669"/>
    <property type="project" value="UniProtKB-UniRule"/>
</dbReference>
<dbReference type="GO" id="GO:0006417">
    <property type="term" value="P:regulation of translation"/>
    <property type="evidence" value="ECO:0007669"/>
    <property type="project" value="UniProtKB-UniRule"/>
</dbReference>
<dbReference type="CDD" id="cd13836">
    <property type="entry name" value="IHF_B"/>
    <property type="match status" value="1"/>
</dbReference>
<dbReference type="FunFam" id="4.10.520.10:FF:000003">
    <property type="entry name" value="Integration host factor subunit beta"/>
    <property type="match status" value="1"/>
</dbReference>
<dbReference type="Gene3D" id="4.10.520.10">
    <property type="entry name" value="IHF-like DNA-binding proteins"/>
    <property type="match status" value="1"/>
</dbReference>
<dbReference type="HAMAP" id="MF_00381">
    <property type="entry name" value="IHF_beta"/>
    <property type="match status" value="1"/>
</dbReference>
<dbReference type="InterPro" id="IPR000119">
    <property type="entry name" value="Hist_DNA-bd"/>
</dbReference>
<dbReference type="InterPro" id="IPR020816">
    <property type="entry name" value="Histone-like_DNA-bd_CS"/>
</dbReference>
<dbReference type="InterPro" id="IPR010992">
    <property type="entry name" value="IHF-like_DNA-bd_dom_sf"/>
</dbReference>
<dbReference type="InterPro" id="IPR005685">
    <property type="entry name" value="IHF_beta"/>
</dbReference>
<dbReference type="NCBIfam" id="TIGR00988">
    <property type="entry name" value="hip"/>
    <property type="match status" value="1"/>
</dbReference>
<dbReference type="NCBIfam" id="NF001222">
    <property type="entry name" value="PRK00199.1"/>
    <property type="match status" value="1"/>
</dbReference>
<dbReference type="PANTHER" id="PTHR33175">
    <property type="entry name" value="DNA-BINDING PROTEIN HU"/>
    <property type="match status" value="1"/>
</dbReference>
<dbReference type="PANTHER" id="PTHR33175:SF5">
    <property type="entry name" value="INTEGRATION HOST FACTOR SUBUNIT BETA"/>
    <property type="match status" value="1"/>
</dbReference>
<dbReference type="Pfam" id="PF00216">
    <property type="entry name" value="Bac_DNA_binding"/>
    <property type="match status" value="1"/>
</dbReference>
<dbReference type="PRINTS" id="PR01727">
    <property type="entry name" value="DNABINDINGHU"/>
</dbReference>
<dbReference type="SMART" id="SM00411">
    <property type="entry name" value="BHL"/>
    <property type="match status" value="1"/>
</dbReference>
<dbReference type="SUPFAM" id="SSF47729">
    <property type="entry name" value="IHF-like DNA-binding proteins"/>
    <property type="match status" value="1"/>
</dbReference>
<dbReference type="PROSITE" id="PS00045">
    <property type="entry name" value="HISTONE_LIKE"/>
    <property type="match status" value="1"/>
</dbReference>
<comment type="function">
    <text evidence="1">This protein is one of the two subunits of integration host factor, a specific DNA-binding protein that functions in genetic recombination as well as in transcriptional and translational control.</text>
</comment>
<comment type="subunit">
    <text evidence="1">Heterodimer of an alpha and a beta chain.</text>
</comment>
<comment type="similarity">
    <text evidence="1">Belongs to the bacterial histone-like protein family.</text>
</comment>
<accession>Q8P8P6</accession>
<reference key="1">
    <citation type="journal article" date="2002" name="Nature">
        <title>Comparison of the genomes of two Xanthomonas pathogens with differing host specificities.</title>
        <authorList>
            <person name="da Silva A.C.R."/>
            <person name="Ferro J.A."/>
            <person name="Reinach F.C."/>
            <person name="Farah C.S."/>
            <person name="Furlan L.R."/>
            <person name="Quaggio R.B."/>
            <person name="Monteiro-Vitorello C.B."/>
            <person name="Van Sluys M.A."/>
            <person name="Almeida N.F. Jr."/>
            <person name="Alves L.M.C."/>
            <person name="do Amaral A.M."/>
            <person name="Bertolini M.C."/>
            <person name="Camargo L.E.A."/>
            <person name="Camarotte G."/>
            <person name="Cannavan F."/>
            <person name="Cardozo J."/>
            <person name="Chambergo F."/>
            <person name="Ciapina L.P."/>
            <person name="Cicarelli R.M.B."/>
            <person name="Coutinho L.L."/>
            <person name="Cursino-Santos J.R."/>
            <person name="El-Dorry H."/>
            <person name="Faria J.B."/>
            <person name="Ferreira A.J.S."/>
            <person name="Ferreira R.C.C."/>
            <person name="Ferro M.I.T."/>
            <person name="Formighieri E.F."/>
            <person name="Franco M.C."/>
            <person name="Greggio C.C."/>
            <person name="Gruber A."/>
            <person name="Katsuyama A.M."/>
            <person name="Kishi L.T."/>
            <person name="Leite R.P."/>
            <person name="Lemos E.G.M."/>
            <person name="Lemos M.V.F."/>
            <person name="Locali E.C."/>
            <person name="Machado M.A."/>
            <person name="Madeira A.M.B.N."/>
            <person name="Martinez-Rossi N.M."/>
            <person name="Martins E.C."/>
            <person name="Meidanis J."/>
            <person name="Menck C.F.M."/>
            <person name="Miyaki C.Y."/>
            <person name="Moon D.H."/>
            <person name="Moreira L.M."/>
            <person name="Novo M.T.M."/>
            <person name="Okura V.K."/>
            <person name="Oliveira M.C."/>
            <person name="Oliveira V.R."/>
            <person name="Pereira H.A."/>
            <person name="Rossi A."/>
            <person name="Sena J.A.D."/>
            <person name="Silva C."/>
            <person name="de Souza R.F."/>
            <person name="Spinola L.A.F."/>
            <person name="Takita M.A."/>
            <person name="Tamura R.E."/>
            <person name="Teixeira E.C."/>
            <person name="Tezza R.I.D."/>
            <person name="Trindade dos Santos M."/>
            <person name="Truffi D."/>
            <person name="Tsai S.M."/>
            <person name="White F.F."/>
            <person name="Setubal J.C."/>
            <person name="Kitajima J.P."/>
        </authorList>
    </citation>
    <scope>NUCLEOTIDE SEQUENCE [LARGE SCALE GENOMIC DNA]</scope>
    <source>
        <strain>ATCC 33913 / DSM 3586 / NCPPB 528 / LMG 568 / P 25</strain>
    </source>
</reference>
<keyword id="KW-0233">DNA recombination</keyword>
<keyword id="KW-0238">DNA-binding</keyword>
<keyword id="KW-1185">Reference proteome</keyword>
<keyword id="KW-0804">Transcription</keyword>
<keyword id="KW-0805">Transcription regulation</keyword>
<keyword id="KW-0810">Translation regulation</keyword>
<proteinExistence type="inferred from homology"/>
<sequence length="103" mass="11403">MTKSELIEILARRQAHLKSDDVDLAVKSLLEMMGQALSDGDRIEIRGFGSFSLHYRPPRLGRNPKTGESVALPGKHVPHFKPGKELRERVSSVVPVDMVDAAD</sequence>
<evidence type="ECO:0000255" key="1">
    <source>
        <dbReference type="HAMAP-Rule" id="MF_00381"/>
    </source>
</evidence>
<evidence type="ECO:0000256" key="2">
    <source>
        <dbReference type="SAM" id="MobiDB-lite"/>
    </source>
</evidence>
<gene>
    <name evidence="1" type="primary">ihfB</name>
    <name evidence="1" type="synonym">himD</name>
    <name type="ordered locus">XCC2193</name>
</gene>
<protein>
    <recommendedName>
        <fullName evidence="1">Integration host factor subunit beta</fullName>
        <shortName evidence="1">IHF-beta</shortName>
    </recommendedName>
</protein>
<organism>
    <name type="scientific">Xanthomonas campestris pv. campestris (strain ATCC 33913 / DSM 3586 / NCPPB 528 / LMG 568 / P 25)</name>
    <dbReference type="NCBI Taxonomy" id="190485"/>
    <lineage>
        <taxon>Bacteria</taxon>
        <taxon>Pseudomonadati</taxon>
        <taxon>Pseudomonadota</taxon>
        <taxon>Gammaproteobacteria</taxon>
        <taxon>Lysobacterales</taxon>
        <taxon>Lysobacteraceae</taxon>
        <taxon>Xanthomonas</taxon>
    </lineage>
</organism>